<dbReference type="EC" id="3.6.1.31" evidence="1"/>
<dbReference type="EMBL" id="CP000725">
    <property type="protein sequence ID" value="ABV10606.1"/>
    <property type="molecule type" value="Genomic_DNA"/>
</dbReference>
<dbReference type="RefSeq" id="WP_012130487.1">
    <property type="nucleotide sequence ID" value="NC_009785.1"/>
</dbReference>
<dbReference type="SMR" id="A8AY22"/>
<dbReference type="STRING" id="467705.SGO_1402"/>
<dbReference type="KEGG" id="sgo:SGO_1402"/>
<dbReference type="eggNOG" id="COG0140">
    <property type="taxonomic scope" value="Bacteria"/>
</dbReference>
<dbReference type="HOGENOM" id="CLU_123337_0_0_9"/>
<dbReference type="UniPathway" id="UPA00031">
    <property type="reaction ID" value="UER00007"/>
</dbReference>
<dbReference type="Proteomes" id="UP000001131">
    <property type="component" value="Chromosome"/>
</dbReference>
<dbReference type="GO" id="GO:0005737">
    <property type="term" value="C:cytoplasm"/>
    <property type="evidence" value="ECO:0007669"/>
    <property type="project" value="UniProtKB-SubCell"/>
</dbReference>
<dbReference type="GO" id="GO:0005524">
    <property type="term" value="F:ATP binding"/>
    <property type="evidence" value="ECO:0007669"/>
    <property type="project" value="UniProtKB-KW"/>
</dbReference>
<dbReference type="GO" id="GO:0004636">
    <property type="term" value="F:phosphoribosyl-ATP diphosphatase activity"/>
    <property type="evidence" value="ECO:0007669"/>
    <property type="project" value="UniProtKB-UniRule"/>
</dbReference>
<dbReference type="GO" id="GO:0000105">
    <property type="term" value="P:L-histidine biosynthetic process"/>
    <property type="evidence" value="ECO:0007669"/>
    <property type="project" value="UniProtKB-UniRule"/>
</dbReference>
<dbReference type="CDD" id="cd11534">
    <property type="entry name" value="NTP-PPase_HisIE_like"/>
    <property type="match status" value="1"/>
</dbReference>
<dbReference type="FunFam" id="1.10.287.1080:FF:000002">
    <property type="entry name" value="Histidine biosynthesis bifunctional protein HisIE"/>
    <property type="match status" value="1"/>
</dbReference>
<dbReference type="Gene3D" id="1.10.287.1080">
    <property type="entry name" value="MazG-like"/>
    <property type="match status" value="1"/>
</dbReference>
<dbReference type="HAMAP" id="MF_01020">
    <property type="entry name" value="HisE"/>
    <property type="match status" value="1"/>
</dbReference>
<dbReference type="InterPro" id="IPR008179">
    <property type="entry name" value="HisE"/>
</dbReference>
<dbReference type="InterPro" id="IPR021130">
    <property type="entry name" value="PRib-ATP_PPHydrolase-like"/>
</dbReference>
<dbReference type="NCBIfam" id="TIGR03188">
    <property type="entry name" value="histidine_hisI"/>
    <property type="match status" value="1"/>
</dbReference>
<dbReference type="PANTHER" id="PTHR42945">
    <property type="entry name" value="HISTIDINE BIOSYNTHESIS BIFUNCTIONAL PROTEIN"/>
    <property type="match status" value="1"/>
</dbReference>
<dbReference type="PANTHER" id="PTHR42945:SF9">
    <property type="entry name" value="HISTIDINE BIOSYNTHESIS BIFUNCTIONAL PROTEIN HISIE"/>
    <property type="match status" value="1"/>
</dbReference>
<dbReference type="Pfam" id="PF01503">
    <property type="entry name" value="PRA-PH"/>
    <property type="match status" value="1"/>
</dbReference>
<dbReference type="SUPFAM" id="SSF101386">
    <property type="entry name" value="all-alpha NTP pyrophosphatases"/>
    <property type="match status" value="1"/>
</dbReference>
<sequence length="104" mass="11830">MLETLYQEALKRKKEPKEGSYTSYLYDKGLDKILKKVGEEATEVVIAAKNDDKNEMANETADLLYHMAVALVETGVSLEEVEAVLQARQGKQSRIHDRPEIDQY</sequence>
<protein>
    <recommendedName>
        <fullName evidence="1">Phosphoribosyl-ATP pyrophosphatase</fullName>
        <shortName evidence="1">PRA-PH</shortName>
        <ecNumber evidence="1">3.6.1.31</ecNumber>
    </recommendedName>
</protein>
<evidence type="ECO:0000255" key="1">
    <source>
        <dbReference type="HAMAP-Rule" id="MF_01020"/>
    </source>
</evidence>
<proteinExistence type="inferred from homology"/>
<reference key="1">
    <citation type="journal article" date="2007" name="J. Bacteriol.">
        <title>Genome-wide transcriptional changes in Streptococcus gordonii in response to competence signaling peptide.</title>
        <authorList>
            <person name="Vickerman M.M."/>
            <person name="Iobst S."/>
            <person name="Jesionowski A.M."/>
            <person name="Gill S.R."/>
        </authorList>
    </citation>
    <scope>NUCLEOTIDE SEQUENCE [LARGE SCALE GENOMIC DNA]</scope>
    <source>
        <strain>Challis / ATCC 35105 / BCRC 15272 / CH1 / DL1 / V288</strain>
    </source>
</reference>
<comment type="catalytic activity">
    <reaction evidence="1">
        <text>1-(5-phospho-beta-D-ribosyl)-ATP + H2O = 1-(5-phospho-beta-D-ribosyl)-5'-AMP + diphosphate + H(+)</text>
        <dbReference type="Rhea" id="RHEA:22828"/>
        <dbReference type="ChEBI" id="CHEBI:15377"/>
        <dbReference type="ChEBI" id="CHEBI:15378"/>
        <dbReference type="ChEBI" id="CHEBI:33019"/>
        <dbReference type="ChEBI" id="CHEBI:59457"/>
        <dbReference type="ChEBI" id="CHEBI:73183"/>
        <dbReference type="EC" id="3.6.1.31"/>
    </reaction>
</comment>
<comment type="pathway">
    <text evidence="1">Amino-acid biosynthesis; L-histidine biosynthesis; L-histidine from 5-phospho-alpha-D-ribose 1-diphosphate: step 2/9.</text>
</comment>
<comment type="subcellular location">
    <subcellularLocation>
        <location evidence="1">Cytoplasm</location>
    </subcellularLocation>
</comment>
<comment type="similarity">
    <text evidence="1">Belongs to the PRA-PH family.</text>
</comment>
<keyword id="KW-0028">Amino-acid biosynthesis</keyword>
<keyword id="KW-0067">ATP-binding</keyword>
<keyword id="KW-0963">Cytoplasm</keyword>
<keyword id="KW-0368">Histidine biosynthesis</keyword>
<keyword id="KW-0378">Hydrolase</keyword>
<keyword id="KW-0547">Nucleotide-binding</keyword>
<keyword id="KW-1185">Reference proteome</keyword>
<accession>A8AY22</accession>
<feature type="chain" id="PRO_1000084172" description="Phosphoribosyl-ATP pyrophosphatase">
    <location>
        <begin position="1"/>
        <end position="104"/>
    </location>
</feature>
<name>HIS2_STRGC</name>
<gene>
    <name evidence="1" type="primary">hisE</name>
    <name type="ordered locus">SGO_1402</name>
</gene>
<organism>
    <name type="scientific">Streptococcus gordonii (strain Challis / ATCC 35105 / BCRC 15272 / CH1 / DL1 / V288)</name>
    <dbReference type="NCBI Taxonomy" id="467705"/>
    <lineage>
        <taxon>Bacteria</taxon>
        <taxon>Bacillati</taxon>
        <taxon>Bacillota</taxon>
        <taxon>Bacilli</taxon>
        <taxon>Lactobacillales</taxon>
        <taxon>Streptococcaceae</taxon>
        <taxon>Streptococcus</taxon>
    </lineage>
</organism>